<comment type="function">
    <text evidence="4">Involved in directing the movement of organelles along actin filaments.</text>
</comment>
<comment type="PTM">
    <text evidence="1">Phosphorylated by ALPK1.</text>
</comment>
<comment type="similarity">
    <text evidence="4">Belongs to the TRAFAC class myosin-kinesin ATPase superfamily. Myosin family.</text>
</comment>
<comment type="caution">
    <text evidence="4">Represents an unconventional myosin. This protein should not be confused with the conventional myosin-1 (MYH1).</text>
</comment>
<feature type="chain" id="PRO_0000123440" description="Unconventional myosin-Ia">
    <location>
        <begin position="1" status="less than"/>
        <end position="842" status="greater than"/>
    </location>
</feature>
<feature type="domain" description="Myosin motor" evidence="3">
    <location>
        <begin position="1" status="less than"/>
        <end position="686"/>
    </location>
</feature>
<feature type="domain" description="IQ 1" evidence="2">
    <location>
        <begin position="689"/>
        <end position="712"/>
    </location>
</feature>
<feature type="domain" description="IQ 2" evidence="2">
    <location>
        <begin position="713"/>
        <end position="733"/>
    </location>
</feature>
<feature type="domain" description="IQ 3" evidence="2">
    <location>
        <begin position="735"/>
        <end position="764"/>
    </location>
</feature>
<feature type="region of interest" description="Actin-binding" evidence="3">
    <location>
        <begin position="563"/>
        <end position="585"/>
    </location>
</feature>
<feature type="binding site" evidence="3">
    <location>
        <begin position="93"/>
        <end position="100"/>
    </location>
    <ligand>
        <name>ATP</name>
        <dbReference type="ChEBI" id="CHEBI:30616"/>
    </ligand>
</feature>
<feature type="non-terminal residue">
    <location>
        <position position="1"/>
    </location>
</feature>
<feature type="non-terminal residue">
    <location>
        <position position="842"/>
    </location>
</feature>
<dbReference type="EMBL" id="U25148">
    <property type="protein sequence ID" value="AAA89132.1"/>
    <property type="molecule type" value="mRNA"/>
</dbReference>
<dbReference type="SMR" id="Q62774"/>
<dbReference type="FunCoup" id="Q62774">
    <property type="interactions" value="28"/>
</dbReference>
<dbReference type="STRING" id="10116.ENSRNOP00000005575"/>
<dbReference type="PhosphoSitePlus" id="Q62774"/>
<dbReference type="jPOST" id="Q62774"/>
<dbReference type="PaxDb" id="10116-ENSRNOP00000005575"/>
<dbReference type="UCSC" id="RGD:3135">
    <property type="organism name" value="rat"/>
</dbReference>
<dbReference type="AGR" id="RGD:3135"/>
<dbReference type="RGD" id="3135">
    <property type="gene designation" value="Myo1a"/>
</dbReference>
<dbReference type="eggNOG" id="KOG0164">
    <property type="taxonomic scope" value="Eukaryota"/>
</dbReference>
<dbReference type="InParanoid" id="Q62774"/>
<dbReference type="PhylomeDB" id="Q62774"/>
<dbReference type="Proteomes" id="UP000002494">
    <property type="component" value="Unplaced"/>
</dbReference>
<dbReference type="GO" id="GO:0015629">
    <property type="term" value="C:actin cytoskeleton"/>
    <property type="evidence" value="ECO:0000314"/>
    <property type="project" value="RGD"/>
</dbReference>
<dbReference type="GO" id="GO:0016324">
    <property type="term" value="C:apical plasma membrane"/>
    <property type="evidence" value="ECO:0000266"/>
    <property type="project" value="RGD"/>
</dbReference>
<dbReference type="GO" id="GO:0009925">
    <property type="term" value="C:basal plasma membrane"/>
    <property type="evidence" value="ECO:0000266"/>
    <property type="project" value="RGD"/>
</dbReference>
<dbReference type="GO" id="GO:0016323">
    <property type="term" value="C:basolateral plasma membrane"/>
    <property type="evidence" value="ECO:0000250"/>
    <property type="project" value="UniProtKB"/>
</dbReference>
<dbReference type="GO" id="GO:0005903">
    <property type="term" value="C:brush border"/>
    <property type="evidence" value="ECO:0000314"/>
    <property type="project" value="RGD"/>
</dbReference>
<dbReference type="GO" id="GO:0031252">
    <property type="term" value="C:cell leading edge"/>
    <property type="evidence" value="ECO:0000314"/>
    <property type="project" value="RGD"/>
</dbReference>
<dbReference type="GO" id="GO:0030864">
    <property type="term" value="C:cortical actin cytoskeleton"/>
    <property type="evidence" value="ECO:0000250"/>
    <property type="project" value="UniProtKB"/>
</dbReference>
<dbReference type="GO" id="GO:0005737">
    <property type="term" value="C:cytoplasm"/>
    <property type="evidence" value="ECO:0000250"/>
    <property type="project" value="UniProtKB"/>
</dbReference>
<dbReference type="GO" id="GO:0031941">
    <property type="term" value="C:filamentous actin"/>
    <property type="evidence" value="ECO:0000250"/>
    <property type="project" value="UniProtKB"/>
</dbReference>
<dbReference type="GO" id="GO:0030426">
    <property type="term" value="C:growth cone"/>
    <property type="evidence" value="ECO:0000314"/>
    <property type="project" value="RGD"/>
</dbReference>
<dbReference type="GO" id="GO:0016328">
    <property type="term" value="C:lateral plasma membrane"/>
    <property type="evidence" value="ECO:0000250"/>
    <property type="project" value="UniProtKB"/>
</dbReference>
<dbReference type="GO" id="GO:0005902">
    <property type="term" value="C:microvillus"/>
    <property type="evidence" value="ECO:0000250"/>
    <property type="project" value="UniProtKB"/>
</dbReference>
<dbReference type="GO" id="GO:0016459">
    <property type="term" value="C:myosin complex"/>
    <property type="evidence" value="ECO:0000304"/>
    <property type="project" value="RGD"/>
</dbReference>
<dbReference type="GO" id="GO:0043025">
    <property type="term" value="C:neuronal cell body"/>
    <property type="evidence" value="ECO:0000314"/>
    <property type="project" value="RGD"/>
</dbReference>
<dbReference type="GO" id="GO:0005886">
    <property type="term" value="C:plasma membrane"/>
    <property type="evidence" value="ECO:0000318"/>
    <property type="project" value="GO_Central"/>
</dbReference>
<dbReference type="GO" id="GO:0044853">
    <property type="term" value="C:plasma membrane raft"/>
    <property type="evidence" value="ECO:0000266"/>
    <property type="project" value="RGD"/>
</dbReference>
<dbReference type="GO" id="GO:0051015">
    <property type="term" value="F:actin filament binding"/>
    <property type="evidence" value="ECO:0000266"/>
    <property type="project" value="RGD"/>
</dbReference>
<dbReference type="GO" id="GO:0005524">
    <property type="term" value="F:ATP binding"/>
    <property type="evidence" value="ECO:0007669"/>
    <property type="project" value="UniProtKB-KW"/>
</dbReference>
<dbReference type="GO" id="GO:0005516">
    <property type="term" value="F:calmodulin binding"/>
    <property type="evidence" value="ECO:0007669"/>
    <property type="project" value="UniProtKB-KW"/>
</dbReference>
<dbReference type="GO" id="GO:0000146">
    <property type="term" value="F:microfilament motor activity"/>
    <property type="evidence" value="ECO:0000318"/>
    <property type="project" value="GO_Central"/>
</dbReference>
<dbReference type="GO" id="GO:0007015">
    <property type="term" value="P:actin filament organization"/>
    <property type="evidence" value="ECO:0000318"/>
    <property type="project" value="GO_Central"/>
</dbReference>
<dbReference type="GO" id="GO:0030048">
    <property type="term" value="P:actin filament-based movement"/>
    <property type="evidence" value="ECO:0000318"/>
    <property type="project" value="GO_Central"/>
</dbReference>
<dbReference type="GO" id="GO:0030030">
    <property type="term" value="P:cell projection organization"/>
    <property type="evidence" value="ECO:0000266"/>
    <property type="project" value="RGD"/>
</dbReference>
<dbReference type="GO" id="GO:0006897">
    <property type="term" value="P:endocytosis"/>
    <property type="evidence" value="ECO:0000318"/>
    <property type="project" value="GO_Central"/>
</dbReference>
<dbReference type="GO" id="GO:0030034">
    <property type="term" value="P:microvillar actin bundle assembly"/>
    <property type="evidence" value="ECO:0000303"/>
    <property type="project" value="RGD"/>
</dbReference>
<dbReference type="GO" id="GO:0030033">
    <property type="term" value="P:microvillus assembly"/>
    <property type="evidence" value="ECO:0000266"/>
    <property type="project" value="RGD"/>
</dbReference>
<dbReference type="GO" id="GO:0032880">
    <property type="term" value="P:regulation of protein localization"/>
    <property type="evidence" value="ECO:0000315"/>
    <property type="project" value="RGD"/>
</dbReference>
<dbReference type="GO" id="GO:0007605">
    <property type="term" value="P:sensory perception of sound"/>
    <property type="evidence" value="ECO:0000250"/>
    <property type="project" value="UniProtKB"/>
</dbReference>
<dbReference type="GO" id="GO:0051648">
    <property type="term" value="P:vesicle localization"/>
    <property type="evidence" value="ECO:0000250"/>
    <property type="project" value="UniProtKB"/>
</dbReference>
<dbReference type="CDD" id="cd01378">
    <property type="entry name" value="MYSc_Myo1"/>
    <property type="match status" value="1"/>
</dbReference>
<dbReference type="FunFam" id="1.10.10.820:FF:000001">
    <property type="entry name" value="Myosin heavy chain"/>
    <property type="match status" value="1"/>
</dbReference>
<dbReference type="FunFam" id="1.20.58.530:FF:000004">
    <property type="entry name" value="Unconventional myosin ID"/>
    <property type="match status" value="1"/>
</dbReference>
<dbReference type="FunFam" id="1.20.5.190:FF:000043">
    <property type="entry name" value="unconventional myosin-Ia isoform X1"/>
    <property type="match status" value="1"/>
</dbReference>
<dbReference type="FunFam" id="1.20.120.720:FF:000004">
    <property type="entry name" value="unconventional myosin-Ib isoform X1"/>
    <property type="match status" value="1"/>
</dbReference>
<dbReference type="Gene3D" id="1.10.10.820">
    <property type="match status" value="1"/>
</dbReference>
<dbReference type="Gene3D" id="1.20.5.190">
    <property type="match status" value="1"/>
</dbReference>
<dbReference type="Gene3D" id="1.20.58.530">
    <property type="match status" value="1"/>
</dbReference>
<dbReference type="Gene3D" id="6.20.240.20">
    <property type="match status" value="1"/>
</dbReference>
<dbReference type="Gene3D" id="3.40.850.10">
    <property type="entry name" value="Kinesin motor domain"/>
    <property type="match status" value="1"/>
</dbReference>
<dbReference type="Gene3D" id="1.20.120.720">
    <property type="entry name" value="Myosin VI head, motor domain, U50 subdomain"/>
    <property type="match status" value="1"/>
</dbReference>
<dbReference type="InterPro" id="IPR000048">
    <property type="entry name" value="IQ_motif_EF-hand-BS"/>
</dbReference>
<dbReference type="InterPro" id="IPR036961">
    <property type="entry name" value="Kinesin_motor_dom_sf"/>
</dbReference>
<dbReference type="InterPro" id="IPR001609">
    <property type="entry name" value="Myosin_head_motor_dom-like"/>
</dbReference>
<dbReference type="InterPro" id="IPR036072">
    <property type="entry name" value="MYSc_Myo1"/>
</dbReference>
<dbReference type="InterPro" id="IPR027417">
    <property type="entry name" value="P-loop_NTPase"/>
</dbReference>
<dbReference type="PANTHER" id="PTHR13140">
    <property type="entry name" value="MYOSIN"/>
    <property type="match status" value="1"/>
</dbReference>
<dbReference type="PANTHER" id="PTHR13140:SF291">
    <property type="entry name" value="UNCONVENTIONAL MYOSIN-IA"/>
    <property type="match status" value="1"/>
</dbReference>
<dbReference type="Pfam" id="PF00612">
    <property type="entry name" value="IQ"/>
    <property type="match status" value="2"/>
</dbReference>
<dbReference type="Pfam" id="PF00063">
    <property type="entry name" value="Myosin_head"/>
    <property type="match status" value="1"/>
</dbReference>
<dbReference type="PRINTS" id="PR00193">
    <property type="entry name" value="MYOSINHEAVY"/>
</dbReference>
<dbReference type="SMART" id="SM00015">
    <property type="entry name" value="IQ"/>
    <property type="match status" value="3"/>
</dbReference>
<dbReference type="SMART" id="SM00242">
    <property type="entry name" value="MYSc"/>
    <property type="match status" value="1"/>
</dbReference>
<dbReference type="SUPFAM" id="SSF52540">
    <property type="entry name" value="P-loop containing nucleoside triphosphate hydrolases"/>
    <property type="match status" value="1"/>
</dbReference>
<dbReference type="PROSITE" id="PS50096">
    <property type="entry name" value="IQ"/>
    <property type="match status" value="2"/>
</dbReference>
<dbReference type="PROSITE" id="PS51456">
    <property type="entry name" value="MYOSIN_MOTOR"/>
    <property type="match status" value="1"/>
</dbReference>
<sequence length="842" mass="97211">GVEDLILLEPLDEESLIKNLQLRYEKKEIYTYIGNVVISMNPYQQLPIYGPEFIAKYRDYTFYELKPHIYALANVAYQSLKDRDRDQCILITGESGAGKTEASKLVMSYVAAVCGKGEQVNSVKEQLLQSNPVLEAFGNAKTIRNDNSSRFGKYMDIEFDFKGSPLGGVITNYLLEKSRVVKQLKGERNFHIFYQLLAGADTQLLKALKLEEDARGYAYLNGEVSRVNGMDDASNFRAVQNAMAVIGFSEEEIRQVLEVTALVLKLGNVKLAGEFQANGLPASGVCDGKGIQEIGEMMGLNSVELEKALSSRTMETGKEKVVTVLNVIQAQYARDALAKNIYSRLFDWIVNRINESIKVGTGEKRKVMGVLDIYGFEILEDNSFEQFVINYCNEKLQQVFIELTLKEEQEEYKREGIPWTKVEYFDNGIICDLIEHSQRGILAMLDEECLRPGVVSDTTFLAKLNQLFSKHSHYESKVTQNAQRQYDRTMGLSCFRICHYAGKVTYDVTSFIDKNNDLLFRDLSQTMWKAQHPLLHSLFPRGNPKEASPKRPPTAGTQFKNSVAILMKNLYSKNPNYIRCIKPNDQQQQGRFTSELVMVQARYLGLLENVRVRRAGYAFRQAYKPFLERYRLLSRSTWPRWNGEDREGVEKVLGSLILSSEELAYGRTKIFIRSPKTLFYLEEQRRLRLQQLATLIQKVYRGWRCRTHYQQMRKSQILLSAWFRGNKQKKHYGKIRSSVLLIQAFVRGWKARKNYRKYFRSGARITLANFIYQSITQKFLLNLKKNLPSTKVLDNTWPAAPYRCFNTANQELQHLFYQWKCKKYRDQLSPKQVQTLREKLCA</sequence>
<protein>
    <recommendedName>
        <fullName>Unconventional myosin-Ia</fullName>
    </recommendedName>
    <alternativeName>
        <fullName>Brush border myosin I</fullName>
        <shortName>BBM-I</shortName>
        <shortName>BBMI</shortName>
    </alternativeName>
    <alternativeName>
        <fullName>Myosin I heavy chain</fullName>
        <shortName>MIHC</shortName>
    </alternativeName>
</protein>
<gene>
    <name type="primary">Myo1a</name>
    <name type="synonym">Bbmi</name>
    <name type="synonym">Myhl</name>
</gene>
<evidence type="ECO:0000250" key="1">
    <source>
        <dbReference type="UniProtKB" id="Q9UBC5"/>
    </source>
</evidence>
<evidence type="ECO:0000255" key="2">
    <source>
        <dbReference type="PROSITE-ProRule" id="PRU00116"/>
    </source>
</evidence>
<evidence type="ECO:0000255" key="3">
    <source>
        <dbReference type="PROSITE-ProRule" id="PRU00782"/>
    </source>
</evidence>
<evidence type="ECO:0000305" key="4"/>
<accession>Q62774</accession>
<keyword id="KW-0009">Actin-binding</keyword>
<keyword id="KW-0067">ATP-binding</keyword>
<keyword id="KW-0112">Calmodulin-binding</keyword>
<keyword id="KW-0505">Motor protein</keyword>
<keyword id="KW-0518">Myosin</keyword>
<keyword id="KW-0547">Nucleotide-binding</keyword>
<keyword id="KW-0597">Phosphoprotein</keyword>
<keyword id="KW-1185">Reference proteome</keyword>
<keyword id="KW-0677">Repeat</keyword>
<proteinExistence type="evidence at transcript level"/>
<organism>
    <name type="scientific">Rattus norvegicus</name>
    <name type="common">Rat</name>
    <dbReference type="NCBI Taxonomy" id="10116"/>
    <lineage>
        <taxon>Eukaryota</taxon>
        <taxon>Metazoa</taxon>
        <taxon>Chordata</taxon>
        <taxon>Craniata</taxon>
        <taxon>Vertebrata</taxon>
        <taxon>Euteleostomi</taxon>
        <taxon>Mammalia</taxon>
        <taxon>Eutheria</taxon>
        <taxon>Euarchontoglires</taxon>
        <taxon>Glires</taxon>
        <taxon>Rodentia</taxon>
        <taxon>Myomorpha</taxon>
        <taxon>Muroidea</taxon>
        <taxon>Muridae</taxon>
        <taxon>Murinae</taxon>
        <taxon>Rattus</taxon>
    </lineage>
</organism>
<reference key="1">
    <citation type="journal article" date="1995" name="Biochem. Biophys. Res. Commun.">
        <title>Identification of brush border myosin-I in liver and testis.</title>
        <authorList>
            <person name="Balish M.F."/>
            <person name="Coluccio L.M."/>
        </authorList>
    </citation>
    <scope>NUCLEOTIDE SEQUENCE [MRNA]</scope>
    <source>
        <strain>Sprague-Dawley</strain>
        <tissue>Liver</tissue>
        <tissue>Testis</tissue>
    </source>
</reference>
<name>MYO1A_RAT</name>